<keyword id="KW-0963">Cytoplasm</keyword>
<keyword id="KW-0687">Ribonucleoprotein</keyword>
<keyword id="KW-0689">Ribosomal protein</keyword>
<gene>
    <name type="primary">RPL3</name>
</gene>
<accession>P49149</accession>
<feature type="initiator methionine" description="Removed" evidence="1">
    <location>
        <position position="1"/>
    </location>
</feature>
<feature type="chain" id="PRO_0000077238" description="Large ribosomal subunit protein uL3">
    <location>
        <begin position="2"/>
        <end position="402"/>
    </location>
</feature>
<feature type="region of interest" description="Disordered" evidence="2">
    <location>
        <begin position="1"/>
        <end position="35"/>
    </location>
</feature>
<feature type="compositionally biased region" description="Basic residues" evidence="2">
    <location>
        <begin position="18"/>
        <end position="31"/>
    </location>
</feature>
<evidence type="ECO:0000250" key="1"/>
<evidence type="ECO:0000256" key="2">
    <source>
        <dbReference type="SAM" id="MobiDB-lite"/>
    </source>
</evidence>
<evidence type="ECO:0000305" key="3"/>
<sequence>MSHRKFSAPRHGSMGFTPKKRSKRHRGKVKAFPKDDPTKPIHLTAFIAFKAGMTHIVREVDKPGSKVNKKEVVEAVTIFEAPPMVIVGIVGYIDTPRGPRQFKTVWAEHLSEDCRGRFYKNWHTSKKKAFQKHAKKWQDEDGRKSIEADLNKMKKYCSKIRVIAHTQMKVMKHREKKAHIMEIQINGGTVAEKVDWAREHLEKQVPVDSVFAQDEMIDCIGVTKGKGFKGVTSRWHTKKLPRKTHKGLRKVACIGAWHPSRVQFTVARAGQKGYHHRTEVNKKIYRLGKSCLTEEGKKNGGTDYDITEKSVNPMGGFPHYGLVNQDFVMIRGCCVGSKKRPITLRKSLIVQTKRFAHEKINLKWIDTSSKFGHGRFQTHAEKRAFMGKLKKDLIAESEAVKT</sequence>
<reference key="1">
    <citation type="journal article" date="1995" name="Gene">
        <title>A cDNA encoding ribosomal protein L3 from the parasitic nematode Toxocara canis.</title>
        <authorList>
            <person name="Moore J."/>
            <person name="Todorova V."/>
            <person name="Kennedy M.W."/>
        </authorList>
    </citation>
    <scope>NUCLEOTIDE SEQUENCE [MRNA]</scope>
</reference>
<dbReference type="EMBL" id="U17358">
    <property type="protein sequence ID" value="AAA92285.1"/>
    <property type="molecule type" value="mRNA"/>
</dbReference>
<dbReference type="PIR" id="JC4382">
    <property type="entry name" value="JC4382"/>
</dbReference>
<dbReference type="SMR" id="P49149"/>
<dbReference type="Proteomes" id="UP000050794">
    <property type="component" value="Unassembled WGS sequence"/>
</dbReference>
<dbReference type="GO" id="GO:0022625">
    <property type="term" value="C:cytosolic large ribosomal subunit"/>
    <property type="evidence" value="ECO:0007669"/>
    <property type="project" value="TreeGrafter"/>
</dbReference>
<dbReference type="GO" id="GO:0003723">
    <property type="term" value="F:RNA binding"/>
    <property type="evidence" value="ECO:0007669"/>
    <property type="project" value="TreeGrafter"/>
</dbReference>
<dbReference type="GO" id="GO:0003735">
    <property type="term" value="F:structural constituent of ribosome"/>
    <property type="evidence" value="ECO:0007669"/>
    <property type="project" value="InterPro"/>
</dbReference>
<dbReference type="GO" id="GO:0006412">
    <property type="term" value="P:translation"/>
    <property type="evidence" value="ECO:0007669"/>
    <property type="project" value="InterPro"/>
</dbReference>
<dbReference type="FunFam" id="2.40.30.10:FF:000079">
    <property type="entry name" value="60S ribosomal protein L3"/>
    <property type="match status" value="1"/>
</dbReference>
<dbReference type="FunFam" id="3.30.1430.10:FF:000001">
    <property type="entry name" value="60S ribosomal protein L3"/>
    <property type="match status" value="1"/>
</dbReference>
<dbReference type="FunFam" id="4.10.960.10:FF:000001">
    <property type="entry name" value="60S ribosomal protein L3"/>
    <property type="match status" value="1"/>
</dbReference>
<dbReference type="FunFam" id="4.10.960.10:FF:000002">
    <property type="entry name" value="60S ribosomal protein L3"/>
    <property type="match status" value="1"/>
</dbReference>
<dbReference type="FunFam" id="2.40.30.10:FF:000351">
    <property type="entry name" value="Ribosomal protein L3"/>
    <property type="match status" value="1"/>
</dbReference>
<dbReference type="Gene3D" id="3.30.1430.10">
    <property type="match status" value="1"/>
</dbReference>
<dbReference type="Gene3D" id="4.10.960.10">
    <property type="entry name" value="Ribosomal protein L3, domain 3"/>
    <property type="match status" value="1"/>
</dbReference>
<dbReference type="Gene3D" id="2.40.30.10">
    <property type="entry name" value="Translation factors"/>
    <property type="match status" value="1"/>
</dbReference>
<dbReference type="InterPro" id="IPR045077">
    <property type="entry name" value="L3_arc_euk"/>
</dbReference>
<dbReference type="InterPro" id="IPR044892">
    <property type="entry name" value="Ribosomal_L3_dom_3_arc_sf"/>
</dbReference>
<dbReference type="InterPro" id="IPR000597">
    <property type="entry name" value="Ribosomal_uL3"/>
</dbReference>
<dbReference type="InterPro" id="IPR019926">
    <property type="entry name" value="Ribosomal_uL3_CS"/>
</dbReference>
<dbReference type="InterPro" id="IPR009000">
    <property type="entry name" value="Transl_B-barrel_sf"/>
</dbReference>
<dbReference type="PANTHER" id="PTHR11363">
    <property type="entry name" value="60S RIBOSOMAL PROTEIN L3-RELATED"/>
    <property type="match status" value="1"/>
</dbReference>
<dbReference type="PANTHER" id="PTHR11363:SF5">
    <property type="entry name" value="LARGE RIBOSOMAL SUBUNIT PROTEIN UL3"/>
    <property type="match status" value="1"/>
</dbReference>
<dbReference type="Pfam" id="PF00297">
    <property type="entry name" value="Ribosomal_L3"/>
    <property type="match status" value="1"/>
</dbReference>
<dbReference type="SUPFAM" id="SSF50447">
    <property type="entry name" value="Translation proteins"/>
    <property type="match status" value="1"/>
</dbReference>
<dbReference type="PROSITE" id="PS00474">
    <property type="entry name" value="RIBOSOMAL_L3"/>
    <property type="match status" value="1"/>
</dbReference>
<name>RL3_TOXCA</name>
<protein>
    <recommendedName>
        <fullName evidence="3">Large ribosomal subunit protein uL3</fullName>
    </recommendedName>
    <alternativeName>
        <fullName>60S ribosomal protein L3</fullName>
    </alternativeName>
</protein>
<organism>
    <name type="scientific">Toxocara canis</name>
    <name type="common">Canine roundworm</name>
    <dbReference type="NCBI Taxonomy" id="6265"/>
    <lineage>
        <taxon>Eukaryota</taxon>
        <taxon>Metazoa</taxon>
        <taxon>Ecdysozoa</taxon>
        <taxon>Nematoda</taxon>
        <taxon>Chromadorea</taxon>
        <taxon>Rhabditida</taxon>
        <taxon>Spirurina</taxon>
        <taxon>Ascaridomorpha</taxon>
        <taxon>Ascaridoidea</taxon>
        <taxon>Toxocaridae</taxon>
        <taxon>Toxocara</taxon>
    </lineage>
</organism>
<comment type="function">
    <text>The L3 protein is a component of the large subunit of cytoplasmic ribosomes.</text>
</comment>
<comment type="subcellular location">
    <subcellularLocation>
        <location>Cytoplasm</location>
    </subcellularLocation>
</comment>
<comment type="similarity">
    <text evidence="3">Belongs to the universal ribosomal protein uL3 family.</text>
</comment>
<proteinExistence type="evidence at transcript level"/>